<reference key="1">
    <citation type="journal article" date="2005" name="Nature">
        <title>The genome of the social amoeba Dictyostelium discoideum.</title>
        <authorList>
            <person name="Eichinger L."/>
            <person name="Pachebat J.A."/>
            <person name="Gloeckner G."/>
            <person name="Rajandream M.A."/>
            <person name="Sucgang R."/>
            <person name="Berriman M."/>
            <person name="Song J."/>
            <person name="Olsen R."/>
            <person name="Szafranski K."/>
            <person name="Xu Q."/>
            <person name="Tunggal B."/>
            <person name="Kummerfeld S."/>
            <person name="Madera M."/>
            <person name="Konfortov B.A."/>
            <person name="Rivero F."/>
            <person name="Bankier A.T."/>
            <person name="Lehmann R."/>
            <person name="Hamlin N."/>
            <person name="Davies R."/>
            <person name="Gaudet P."/>
            <person name="Fey P."/>
            <person name="Pilcher K."/>
            <person name="Chen G."/>
            <person name="Saunders D."/>
            <person name="Sodergren E.J."/>
            <person name="Davis P."/>
            <person name="Kerhornou A."/>
            <person name="Nie X."/>
            <person name="Hall N."/>
            <person name="Anjard C."/>
            <person name="Hemphill L."/>
            <person name="Bason N."/>
            <person name="Farbrother P."/>
            <person name="Desany B."/>
            <person name="Just E."/>
            <person name="Morio T."/>
            <person name="Rost R."/>
            <person name="Churcher C.M."/>
            <person name="Cooper J."/>
            <person name="Haydock S."/>
            <person name="van Driessche N."/>
            <person name="Cronin A."/>
            <person name="Goodhead I."/>
            <person name="Muzny D.M."/>
            <person name="Mourier T."/>
            <person name="Pain A."/>
            <person name="Lu M."/>
            <person name="Harper D."/>
            <person name="Lindsay R."/>
            <person name="Hauser H."/>
            <person name="James K.D."/>
            <person name="Quiles M."/>
            <person name="Madan Babu M."/>
            <person name="Saito T."/>
            <person name="Buchrieser C."/>
            <person name="Wardroper A."/>
            <person name="Felder M."/>
            <person name="Thangavelu M."/>
            <person name="Johnson D."/>
            <person name="Knights A."/>
            <person name="Loulseged H."/>
            <person name="Mungall K.L."/>
            <person name="Oliver K."/>
            <person name="Price C."/>
            <person name="Quail M.A."/>
            <person name="Urushihara H."/>
            <person name="Hernandez J."/>
            <person name="Rabbinowitsch E."/>
            <person name="Steffen D."/>
            <person name="Sanders M."/>
            <person name="Ma J."/>
            <person name="Kohara Y."/>
            <person name="Sharp S."/>
            <person name="Simmonds M.N."/>
            <person name="Spiegler S."/>
            <person name="Tivey A."/>
            <person name="Sugano S."/>
            <person name="White B."/>
            <person name="Walker D."/>
            <person name="Woodward J.R."/>
            <person name="Winckler T."/>
            <person name="Tanaka Y."/>
            <person name="Shaulsky G."/>
            <person name="Schleicher M."/>
            <person name="Weinstock G.M."/>
            <person name="Rosenthal A."/>
            <person name="Cox E.C."/>
            <person name="Chisholm R.L."/>
            <person name="Gibbs R.A."/>
            <person name="Loomis W.F."/>
            <person name="Platzer M."/>
            <person name="Kay R.R."/>
            <person name="Williams J.G."/>
            <person name="Dear P.H."/>
            <person name="Noegel A.A."/>
            <person name="Barrell B.G."/>
            <person name="Kuspa A."/>
        </authorList>
    </citation>
    <scope>NUCLEOTIDE SEQUENCE [LARGE SCALE GENOMIC DNA]</scope>
    <source>
        <strain>AX4</strain>
    </source>
</reference>
<evidence type="ECO:0000256" key="1">
    <source>
        <dbReference type="SAM" id="MobiDB-lite"/>
    </source>
</evidence>
<evidence type="ECO:0000305" key="2"/>
<protein>
    <recommendedName>
        <fullName>Putative uncharacterized protein DDB_G0290989</fullName>
    </recommendedName>
</protein>
<organism>
    <name type="scientific">Dictyostelium discoideum</name>
    <name type="common">Social amoeba</name>
    <dbReference type="NCBI Taxonomy" id="44689"/>
    <lineage>
        <taxon>Eukaryota</taxon>
        <taxon>Amoebozoa</taxon>
        <taxon>Evosea</taxon>
        <taxon>Eumycetozoa</taxon>
        <taxon>Dictyostelia</taxon>
        <taxon>Dictyosteliales</taxon>
        <taxon>Dictyosteliaceae</taxon>
        <taxon>Dictyostelium</taxon>
    </lineage>
</organism>
<gene>
    <name type="ORF">DDB_G0290989</name>
</gene>
<keyword id="KW-1185">Reference proteome</keyword>
<proteinExistence type="predicted"/>
<accession>Q54F99</accession>
<accession>Q54F98</accession>
<feature type="chain" id="PRO_0000346897" description="Putative uncharacterized protein DDB_G0290989">
    <location>
        <begin position="1"/>
        <end position="1153"/>
    </location>
</feature>
<feature type="region of interest" description="Disordered" evidence="1">
    <location>
        <begin position="164"/>
        <end position="193"/>
    </location>
</feature>
<feature type="region of interest" description="Disordered" evidence="1">
    <location>
        <begin position="224"/>
        <end position="245"/>
    </location>
</feature>
<feature type="region of interest" description="Disordered" evidence="1">
    <location>
        <begin position="294"/>
        <end position="316"/>
    </location>
</feature>
<feature type="region of interest" description="Disordered" evidence="1">
    <location>
        <begin position="332"/>
        <end position="427"/>
    </location>
</feature>
<feature type="region of interest" description="Disordered" evidence="1">
    <location>
        <begin position="613"/>
        <end position="648"/>
    </location>
</feature>
<feature type="region of interest" description="Disordered" evidence="1">
    <location>
        <begin position="683"/>
        <end position="703"/>
    </location>
</feature>
<feature type="region of interest" description="Disordered" evidence="1">
    <location>
        <begin position="717"/>
        <end position="740"/>
    </location>
</feature>
<feature type="region of interest" description="Disordered" evidence="1">
    <location>
        <begin position="772"/>
        <end position="819"/>
    </location>
</feature>
<feature type="region of interest" description="Disordered" evidence="1">
    <location>
        <begin position="838"/>
        <end position="874"/>
    </location>
</feature>
<feature type="region of interest" description="Disordered" evidence="1">
    <location>
        <begin position="942"/>
        <end position="1106"/>
    </location>
</feature>
<feature type="compositionally biased region" description="Pro residues" evidence="1">
    <location>
        <begin position="169"/>
        <end position="179"/>
    </location>
</feature>
<feature type="compositionally biased region" description="Low complexity" evidence="1">
    <location>
        <begin position="231"/>
        <end position="240"/>
    </location>
</feature>
<feature type="compositionally biased region" description="Low complexity" evidence="1">
    <location>
        <begin position="298"/>
        <end position="312"/>
    </location>
</feature>
<feature type="compositionally biased region" description="Low complexity" evidence="1">
    <location>
        <begin position="336"/>
        <end position="391"/>
    </location>
</feature>
<feature type="compositionally biased region" description="Low complexity" evidence="1">
    <location>
        <begin position="399"/>
        <end position="423"/>
    </location>
</feature>
<feature type="compositionally biased region" description="Polar residues" evidence="1">
    <location>
        <begin position="613"/>
        <end position="625"/>
    </location>
</feature>
<feature type="compositionally biased region" description="Basic and acidic residues" evidence="1">
    <location>
        <begin position="687"/>
        <end position="699"/>
    </location>
</feature>
<feature type="compositionally biased region" description="Low complexity" evidence="1">
    <location>
        <begin position="721"/>
        <end position="734"/>
    </location>
</feature>
<feature type="compositionally biased region" description="Basic and acidic residues" evidence="1">
    <location>
        <begin position="772"/>
        <end position="784"/>
    </location>
</feature>
<feature type="compositionally biased region" description="Low complexity" evidence="1">
    <location>
        <begin position="788"/>
        <end position="808"/>
    </location>
</feature>
<feature type="compositionally biased region" description="Low complexity" evidence="1">
    <location>
        <begin position="839"/>
        <end position="854"/>
    </location>
</feature>
<feature type="compositionally biased region" description="Basic and acidic residues" evidence="1">
    <location>
        <begin position="856"/>
        <end position="874"/>
    </location>
</feature>
<feature type="compositionally biased region" description="Low complexity" evidence="1">
    <location>
        <begin position="942"/>
        <end position="987"/>
    </location>
</feature>
<feature type="compositionally biased region" description="Polar residues" evidence="1">
    <location>
        <begin position="988"/>
        <end position="998"/>
    </location>
</feature>
<feature type="compositionally biased region" description="Polar residues" evidence="1">
    <location>
        <begin position="1005"/>
        <end position="1015"/>
    </location>
</feature>
<feature type="compositionally biased region" description="Low complexity" evidence="1">
    <location>
        <begin position="1019"/>
        <end position="1059"/>
    </location>
</feature>
<feature type="compositionally biased region" description="Basic and acidic residues" evidence="1">
    <location>
        <begin position="1064"/>
        <end position="1081"/>
    </location>
</feature>
<feature type="compositionally biased region" description="Low complexity" evidence="1">
    <location>
        <begin position="1082"/>
        <end position="1105"/>
    </location>
</feature>
<sequence>MMDNQSKPSIIPSYEWYERSINRVEDSSSSINNVSSKLVFFFIIGEMKDLKIPQNTRLLLSTKHYILPMIHLEDKQKETINFPSKKVRIIFGYFNNSNKEGEITLFLDTELEKSHNLNITNKHINNDQPLKGLSKNFNSLSLLLQSLQRNYNASLLTFDKSTNTTIKQLPPPLPQPQPQPHQQQPHNKKQIDDIELKKKKEIEEIDEIEDFESTQPLVVDEVDDNYDDIDNNNNNNNNSNNDDDKLEDIEEHNEEEEDQIHLFTHAHSLTQKPQLPKKQQQSFDEFQRKIKDNKSPQKLKLQQQQQQQQQQKQSKHFDAFEEELLEQQKIHEHKLQQQQQIKPQKQQLQQPQQQPQQQPQQQPQQQPQQQPQQQPQQQQKQQQKQQPTPKKIINSLQLNNVNNNNNNNNNNNNNNNNNNNNNNKNKKEIMPGWLEKAILSNSFPLNPCGQIVSLPEDSHKKKNISLYLSDNICYIQIIVSENTVREALENKKNVFNFGFLFGCVIEILDYTIKPDQDFSKFVLNINKFVILNKNKHSPISPTPISKHPRVISLLRIKKDMNKNASNNIGNNIIYSESLISSDQLEILNSLELWNLPTQITKQLSLQDLTEGNLSMLDSTNDGSSQEYEEEEEEEKNQKNFEKEEEGENIQMRQLYEKYREEHQSQVKKQQIIQKLKQQQQQQQQQQQEKEKQQQEKQQDEEMSDFENIQNLMEEVQKSDDNNNNNDNNNNNNNNQTSKRKRLNEFESDPDDIYDLLESNTFAGHQVKGVDENKKLRVDSEDQQTKKLTTTTTTTTTTTNTNNNNNNNNSGIDSGTKTIEDDNQLDEDFFDGLNYSIIASSGGSNNNNNNDQNDSITTKEKERSETIKTHNEDEKKNSLSFIKFENPIPSNNPITTTVTTTSASPKITEIPKQPYAIKPSISSYSIRPTLPTKPSLIKSLNNNNNNNNNNNINNINNIGNKNTTVNNSNHSNHSNNNINNNNIFKNSNPIVDTNFSSTTKTDEAQQSKIFTGNQLPKSPINNENVVNNNNNNEINNTTTTTTNNNSGIHKNNNNYNSDNSDNSDDGLKQEKEEQKEEQKENKNNNNNNNNNNNNNNNNNNNNNNNEVLNFSFSLTSSSGTNVKKTIPILLADYSCTSVIQEGGFEIIVKRKENK</sequence>
<comment type="sequence caution" evidence="2">
    <conflict type="erroneous gene model prediction">
        <sequence resource="EMBL-CDS" id="EAL61925"/>
    </conflict>
</comment>
<comment type="sequence caution" evidence="2">
    <conflict type="erroneous gene model prediction">
        <sequence resource="EMBL-CDS" id="EAL61952"/>
    </conflict>
</comment>
<dbReference type="EMBL" id="AAFI02000174">
    <property type="protein sequence ID" value="EAL61925.1"/>
    <property type="status" value="ALT_SEQ"/>
    <property type="molecule type" value="Genomic_DNA"/>
</dbReference>
<dbReference type="EMBL" id="AAFI02000174">
    <property type="protein sequence ID" value="EAL61952.1"/>
    <property type="status" value="ALT_SEQ"/>
    <property type="molecule type" value="Genomic_DNA"/>
</dbReference>
<dbReference type="RefSeq" id="XP_635438.1">
    <property type="nucleotide sequence ID" value="XM_630346.1"/>
</dbReference>
<dbReference type="RefSeq" id="XP_635439.1">
    <property type="nucleotide sequence ID" value="XM_630347.1"/>
</dbReference>
<dbReference type="SMR" id="Q54F99"/>
<dbReference type="STRING" id="44689.Q54F99"/>
<dbReference type="GlyGen" id="Q54F99">
    <property type="glycosylation" value="1 site"/>
</dbReference>
<dbReference type="PaxDb" id="44689-DDB0216052"/>
<dbReference type="EnsemblProtists" id="EAL61925">
    <property type="protein sequence ID" value="EAL61925"/>
    <property type="gene ID" value="DDB_G0290989"/>
</dbReference>
<dbReference type="EnsemblProtists" id="EAL61952">
    <property type="protein sequence ID" value="EAL61952"/>
    <property type="gene ID" value="DDB_G0291043"/>
</dbReference>
<dbReference type="GeneID" id="8627938"/>
<dbReference type="KEGG" id="ddi:DDB_G0290989"/>
<dbReference type="KEGG" id="ddi:DDB_G0291043"/>
<dbReference type="dictyBase" id="DDB_G0290989"/>
<dbReference type="VEuPathDB" id="AmoebaDB:DDB_G0290989"/>
<dbReference type="VEuPathDB" id="AmoebaDB:DDB_G0291043"/>
<dbReference type="InParanoid" id="Q54F99"/>
<dbReference type="PRO" id="PR:Q54F99"/>
<dbReference type="Proteomes" id="UP000002195">
    <property type="component" value="Chromosome 5"/>
</dbReference>
<dbReference type="GO" id="GO:0016592">
    <property type="term" value="C:mediator complex"/>
    <property type="evidence" value="ECO:0000318"/>
    <property type="project" value="GO_Central"/>
</dbReference>
<dbReference type="GO" id="GO:0003713">
    <property type="term" value="F:transcription coactivator activity"/>
    <property type="evidence" value="ECO:0000318"/>
    <property type="project" value="GO_Central"/>
</dbReference>
<dbReference type="GO" id="GO:0031124">
    <property type="term" value="P:mRNA 3'-end processing"/>
    <property type="evidence" value="ECO:0007669"/>
    <property type="project" value="InterPro"/>
</dbReference>
<dbReference type="GO" id="GO:0045944">
    <property type="term" value="P:positive regulation of transcription by RNA polymerase II"/>
    <property type="evidence" value="ECO:0000318"/>
    <property type="project" value="GO_Central"/>
</dbReference>
<dbReference type="InterPro" id="IPR045245">
    <property type="entry name" value="Pfs2-like"/>
</dbReference>
<dbReference type="PANTHER" id="PTHR22836:SF0">
    <property type="entry name" value="PRE-MRNA 3' END PROCESSING PROTEIN WDR33"/>
    <property type="match status" value="1"/>
</dbReference>
<dbReference type="PANTHER" id="PTHR22836">
    <property type="entry name" value="WD40 REPEAT PROTEIN"/>
    <property type="match status" value="1"/>
</dbReference>
<name>Y9197_DICDI</name>